<comment type="catalytic activity">
    <reaction evidence="2">
        <text>an aldehyde + NAD(+) + H2O = a carboxylate + NADH + 2 H(+)</text>
        <dbReference type="Rhea" id="RHEA:16185"/>
        <dbReference type="ChEBI" id="CHEBI:15377"/>
        <dbReference type="ChEBI" id="CHEBI:15378"/>
        <dbReference type="ChEBI" id="CHEBI:17478"/>
        <dbReference type="ChEBI" id="CHEBI:29067"/>
        <dbReference type="ChEBI" id="CHEBI:57540"/>
        <dbReference type="ChEBI" id="CHEBI:57945"/>
        <dbReference type="EC" id="1.2.1.3"/>
    </reaction>
</comment>
<comment type="similarity">
    <text evidence="2">Belongs to the aldehyde dehydrogenase family.</text>
</comment>
<gene>
    <name type="ordered locus">SAUSA300_2076</name>
</gene>
<name>ALDH_STAA3</name>
<dbReference type="EC" id="1.2.1.3" evidence="2"/>
<dbReference type="EMBL" id="CP000255">
    <property type="protein sequence ID" value="ABD20518.1"/>
    <property type="molecule type" value="Genomic_DNA"/>
</dbReference>
<dbReference type="RefSeq" id="WP_001206093.1">
    <property type="nucleotide sequence ID" value="NZ_CP027476.1"/>
</dbReference>
<dbReference type="SMR" id="Q2FF06"/>
<dbReference type="KEGG" id="saa:SAUSA300_2076"/>
<dbReference type="HOGENOM" id="CLU_005391_0_2_9"/>
<dbReference type="OMA" id="PMPIAAW"/>
<dbReference type="Proteomes" id="UP000001939">
    <property type="component" value="Chromosome"/>
</dbReference>
<dbReference type="GO" id="GO:0004029">
    <property type="term" value="F:aldehyde dehydrogenase (NAD+) activity"/>
    <property type="evidence" value="ECO:0007669"/>
    <property type="project" value="UniProtKB-EC"/>
</dbReference>
<dbReference type="GO" id="GO:0006081">
    <property type="term" value="P:aldehyde metabolic process"/>
    <property type="evidence" value="ECO:0007669"/>
    <property type="project" value="InterPro"/>
</dbReference>
<dbReference type="CDD" id="cd07138">
    <property type="entry name" value="ALDH_CddD_SSP0762"/>
    <property type="match status" value="1"/>
</dbReference>
<dbReference type="FunFam" id="3.40.605.10:FF:000026">
    <property type="entry name" value="Aldehyde dehydrogenase, putative"/>
    <property type="match status" value="1"/>
</dbReference>
<dbReference type="FunFam" id="3.40.309.10:FF:000012">
    <property type="entry name" value="Betaine aldehyde dehydrogenase"/>
    <property type="match status" value="1"/>
</dbReference>
<dbReference type="FunFam" id="3.40.605.10:FF:000007">
    <property type="entry name" value="NAD/NADP-dependent betaine aldehyde dehydrogenase"/>
    <property type="match status" value="1"/>
</dbReference>
<dbReference type="Gene3D" id="3.40.605.10">
    <property type="entry name" value="Aldehyde Dehydrogenase, Chain A, domain 1"/>
    <property type="match status" value="1"/>
</dbReference>
<dbReference type="Gene3D" id="3.40.309.10">
    <property type="entry name" value="Aldehyde Dehydrogenase, Chain A, domain 2"/>
    <property type="match status" value="1"/>
</dbReference>
<dbReference type="InterPro" id="IPR016161">
    <property type="entry name" value="Ald_DH/histidinol_DH"/>
</dbReference>
<dbReference type="InterPro" id="IPR016163">
    <property type="entry name" value="Ald_DH_C"/>
</dbReference>
<dbReference type="InterPro" id="IPR016160">
    <property type="entry name" value="Ald_DH_CS_CYS"/>
</dbReference>
<dbReference type="InterPro" id="IPR029510">
    <property type="entry name" value="Ald_DH_CS_GLU"/>
</dbReference>
<dbReference type="InterPro" id="IPR016162">
    <property type="entry name" value="Ald_DH_N"/>
</dbReference>
<dbReference type="InterPro" id="IPR015590">
    <property type="entry name" value="Aldehyde_DH_dom"/>
</dbReference>
<dbReference type="InterPro" id="IPR012394">
    <property type="entry name" value="Aldehyde_DH_NAD(P)"/>
</dbReference>
<dbReference type="PANTHER" id="PTHR42804">
    <property type="entry name" value="ALDEHYDE DEHYDROGENASE"/>
    <property type="match status" value="1"/>
</dbReference>
<dbReference type="PANTHER" id="PTHR42804:SF1">
    <property type="entry name" value="ALDEHYDE DEHYDROGENASE-RELATED"/>
    <property type="match status" value="1"/>
</dbReference>
<dbReference type="Pfam" id="PF00171">
    <property type="entry name" value="Aldedh"/>
    <property type="match status" value="1"/>
</dbReference>
<dbReference type="PIRSF" id="PIRSF036492">
    <property type="entry name" value="ALDH"/>
    <property type="match status" value="1"/>
</dbReference>
<dbReference type="SUPFAM" id="SSF53720">
    <property type="entry name" value="ALDH-like"/>
    <property type="match status" value="1"/>
</dbReference>
<dbReference type="PROSITE" id="PS00070">
    <property type="entry name" value="ALDEHYDE_DEHYDR_CYS"/>
    <property type="match status" value="1"/>
</dbReference>
<dbReference type="PROSITE" id="PS00687">
    <property type="entry name" value="ALDEHYDE_DEHYDR_GLU"/>
    <property type="match status" value="1"/>
</dbReference>
<protein>
    <recommendedName>
        <fullName evidence="2">Putative aldehyde dehydrogenase</fullName>
        <ecNumber evidence="2">1.2.1.3</ecNumber>
    </recommendedName>
</protein>
<accession>Q2FF06</accession>
<keyword id="KW-0520">NAD</keyword>
<keyword id="KW-0560">Oxidoreductase</keyword>
<sequence>MRDYTKQYINGEWVESNSNETIEVINPATEEVIGKVAKGNKADVDKAVEAADDVYLEFRHTSVKERQALLDKIVKEYENRKDDIVQAITDELGAPLSLSERVHYQMGLNHFVAARDALDNYEFEERRGDDLVVKEAIGVSGLITPWNFPTNQTSLKLAAAFAAGSPVVLKPSEETPFAAVILAEIFDKVGVPKGVFNLVNGDGAGVGNPLSEHPKVRMMSFTGSGPTGSKIMEKAAKDFKKVSLELGGKSPYIVLDDVDIKEAAKATTGKVVNNTGQVCTAGTRVLVPNKIKDAFLAELKEQFSQVRVGNPREDGTQVGPIISKKQFDQVQNYINKGIEEGAELFYGGPGKPEGLEKGYFARPTIFINVDNQMTIAQEEIFGPVMSVITYNDLDEAIQIANDTKYGLAGYVIGKDKETLHKVARSIEAGTVEINEAGRKPDLPFGGYKQSGLGREWGDYGIEEFLEVKSIAGYFK</sequence>
<evidence type="ECO:0000250" key="1">
    <source>
        <dbReference type="UniProtKB" id="P25526"/>
    </source>
</evidence>
<evidence type="ECO:0000305" key="2"/>
<organism>
    <name type="scientific">Staphylococcus aureus (strain USA300)</name>
    <dbReference type="NCBI Taxonomy" id="367830"/>
    <lineage>
        <taxon>Bacteria</taxon>
        <taxon>Bacillati</taxon>
        <taxon>Bacillota</taxon>
        <taxon>Bacilli</taxon>
        <taxon>Bacillales</taxon>
        <taxon>Staphylococcaceae</taxon>
        <taxon>Staphylococcus</taxon>
    </lineage>
</organism>
<feature type="chain" id="PRO_0000293560" description="Putative aldehyde dehydrogenase">
    <location>
        <begin position="1"/>
        <end position="475"/>
    </location>
</feature>
<feature type="active site" description="Proton acceptor" evidence="1">
    <location>
        <position position="245"/>
    </location>
</feature>
<feature type="active site" description="Nucleophile" evidence="1">
    <location>
        <position position="279"/>
    </location>
</feature>
<feature type="binding site" evidence="1">
    <location>
        <begin position="146"/>
        <end position="147"/>
    </location>
    <ligand>
        <name>NAD(+)</name>
        <dbReference type="ChEBI" id="CHEBI:57540"/>
    </ligand>
</feature>
<feature type="binding site" evidence="1">
    <location>
        <begin position="223"/>
        <end position="224"/>
    </location>
    <ligand>
        <name>NAD(+)</name>
        <dbReference type="ChEBI" id="CHEBI:57540"/>
    </ligand>
</feature>
<feature type="binding site" evidence="1">
    <location>
        <position position="246"/>
    </location>
    <ligand>
        <name>NAD(+)</name>
        <dbReference type="ChEBI" id="CHEBI:57540"/>
    </ligand>
</feature>
<feature type="binding site" evidence="1">
    <location>
        <position position="379"/>
    </location>
    <ligand>
        <name>NAD(+)</name>
        <dbReference type="ChEBI" id="CHEBI:57540"/>
    </ligand>
</feature>
<proteinExistence type="inferred from homology"/>
<reference key="1">
    <citation type="journal article" date="2006" name="Lancet">
        <title>Complete genome sequence of USA300, an epidemic clone of community-acquired meticillin-resistant Staphylococcus aureus.</title>
        <authorList>
            <person name="Diep B.A."/>
            <person name="Gill S.R."/>
            <person name="Chang R.F."/>
            <person name="Phan T.H."/>
            <person name="Chen J.H."/>
            <person name="Davidson M.G."/>
            <person name="Lin F."/>
            <person name="Lin J."/>
            <person name="Carleton H.A."/>
            <person name="Mongodin E.F."/>
            <person name="Sensabaugh G.F."/>
            <person name="Perdreau-Remington F."/>
        </authorList>
    </citation>
    <scope>NUCLEOTIDE SEQUENCE [LARGE SCALE GENOMIC DNA]</scope>
    <source>
        <strain>USA300</strain>
    </source>
</reference>